<reference key="1">
    <citation type="journal article" date="2002" name="Nature">
        <title>Comparison of the genomes of two Xanthomonas pathogens with differing host specificities.</title>
        <authorList>
            <person name="da Silva A.C.R."/>
            <person name="Ferro J.A."/>
            <person name="Reinach F.C."/>
            <person name="Farah C.S."/>
            <person name="Furlan L.R."/>
            <person name="Quaggio R.B."/>
            <person name="Monteiro-Vitorello C.B."/>
            <person name="Van Sluys M.A."/>
            <person name="Almeida N.F. Jr."/>
            <person name="Alves L.M.C."/>
            <person name="do Amaral A.M."/>
            <person name="Bertolini M.C."/>
            <person name="Camargo L.E.A."/>
            <person name="Camarotte G."/>
            <person name="Cannavan F."/>
            <person name="Cardozo J."/>
            <person name="Chambergo F."/>
            <person name="Ciapina L.P."/>
            <person name="Cicarelli R.M.B."/>
            <person name="Coutinho L.L."/>
            <person name="Cursino-Santos J.R."/>
            <person name="El-Dorry H."/>
            <person name="Faria J.B."/>
            <person name="Ferreira A.J.S."/>
            <person name="Ferreira R.C.C."/>
            <person name="Ferro M.I.T."/>
            <person name="Formighieri E.F."/>
            <person name="Franco M.C."/>
            <person name="Greggio C.C."/>
            <person name="Gruber A."/>
            <person name="Katsuyama A.M."/>
            <person name="Kishi L.T."/>
            <person name="Leite R.P."/>
            <person name="Lemos E.G.M."/>
            <person name="Lemos M.V.F."/>
            <person name="Locali E.C."/>
            <person name="Machado M.A."/>
            <person name="Madeira A.M.B.N."/>
            <person name="Martinez-Rossi N.M."/>
            <person name="Martins E.C."/>
            <person name="Meidanis J."/>
            <person name="Menck C.F.M."/>
            <person name="Miyaki C.Y."/>
            <person name="Moon D.H."/>
            <person name="Moreira L.M."/>
            <person name="Novo M.T.M."/>
            <person name="Okura V.K."/>
            <person name="Oliveira M.C."/>
            <person name="Oliveira V.R."/>
            <person name="Pereira H.A."/>
            <person name="Rossi A."/>
            <person name="Sena J.A.D."/>
            <person name="Silva C."/>
            <person name="de Souza R.F."/>
            <person name="Spinola L.A.F."/>
            <person name="Takita M.A."/>
            <person name="Tamura R.E."/>
            <person name="Teixeira E.C."/>
            <person name="Tezza R.I.D."/>
            <person name="Trindade dos Santos M."/>
            <person name="Truffi D."/>
            <person name="Tsai S.M."/>
            <person name="White F.F."/>
            <person name="Setubal J.C."/>
            <person name="Kitajima J.P."/>
        </authorList>
    </citation>
    <scope>NUCLEOTIDE SEQUENCE [LARGE SCALE GENOMIC DNA]</scope>
    <source>
        <strain>ATCC 33913 / DSM 3586 / NCPPB 528 / LMG 568 / P 25</strain>
    </source>
</reference>
<evidence type="ECO:0000255" key="1">
    <source>
        <dbReference type="HAMAP-Rule" id="MF_01658"/>
    </source>
</evidence>
<sequence length="217" mass="23956">MTQIPPSRLHSPLDRLLVEAQRALDTVFGNPPAERPNPAGDTPDAALAPAQRQHAAGLMRINHVGEVCAQGLYFGQAAVARDDHTRQHLLTAAQEETDHLAWCADRLRELESRPSLFNPLWYAGSYALGAVAGLRGDDWSLGFVVETERQVEAHLDEHLETLPETDQRSRAILRVMKIDEARHADHAEQAGARILPPPIPSAMALASKLMKTIAYRF</sequence>
<accession>Q8PD67</accession>
<gene>
    <name evidence="1" type="primary">coq7</name>
    <name type="ordered locus">XCC0475</name>
</gene>
<proteinExistence type="inferred from homology"/>
<comment type="function">
    <text evidence="1">Catalyzes the hydroxylation of 2-nonaprenyl-3-methyl-6-methoxy-1,4-benzoquinol during ubiquinone biosynthesis.</text>
</comment>
<comment type="catalytic activity">
    <reaction evidence="1">
        <text>a 5-methoxy-2-methyl-3-(all-trans-polyprenyl)benzene-1,4-diol + AH2 + O2 = a 3-demethylubiquinol + A + H2O</text>
        <dbReference type="Rhea" id="RHEA:50908"/>
        <dbReference type="Rhea" id="RHEA-COMP:10859"/>
        <dbReference type="Rhea" id="RHEA-COMP:10914"/>
        <dbReference type="ChEBI" id="CHEBI:13193"/>
        <dbReference type="ChEBI" id="CHEBI:15377"/>
        <dbReference type="ChEBI" id="CHEBI:15379"/>
        <dbReference type="ChEBI" id="CHEBI:17499"/>
        <dbReference type="ChEBI" id="CHEBI:84167"/>
        <dbReference type="ChEBI" id="CHEBI:84422"/>
        <dbReference type="EC" id="1.14.99.60"/>
    </reaction>
</comment>
<comment type="cofactor">
    <cofactor evidence="1">
        <name>Fe cation</name>
        <dbReference type="ChEBI" id="CHEBI:24875"/>
    </cofactor>
    <text evidence="1">Binds 2 iron ions per subunit.</text>
</comment>
<comment type="pathway">
    <text evidence="1">Cofactor biosynthesis; ubiquinone biosynthesis.</text>
</comment>
<comment type="subcellular location">
    <subcellularLocation>
        <location evidence="1">Cell membrane</location>
        <topology evidence="1">Peripheral membrane protein</topology>
    </subcellularLocation>
</comment>
<comment type="similarity">
    <text evidence="1">Belongs to the COQ7 family.</text>
</comment>
<organism>
    <name type="scientific">Xanthomonas campestris pv. campestris (strain ATCC 33913 / DSM 3586 / NCPPB 528 / LMG 568 / P 25)</name>
    <dbReference type="NCBI Taxonomy" id="190485"/>
    <lineage>
        <taxon>Bacteria</taxon>
        <taxon>Pseudomonadati</taxon>
        <taxon>Pseudomonadota</taxon>
        <taxon>Gammaproteobacteria</taxon>
        <taxon>Lysobacterales</taxon>
        <taxon>Lysobacteraceae</taxon>
        <taxon>Xanthomonas</taxon>
    </lineage>
</organism>
<name>COQ7_XANCP</name>
<protein>
    <recommendedName>
        <fullName evidence="1">3-demethoxyubiquinol 3-hydroxylase</fullName>
        <shortName evidence="1">DMQ hydroxylase</shortName>
        <ecNumber evidence="1">1.14.99.60</ecNumber>
    </recommendedName>
    <alternativeName>
        <fullName evidence="1">2-nonaprenyl-3-methyl-6-methoxy-1,4-benzoquinol hydroxylase</fullName>
    </alternativeName>
</protein>
<feature type="chain" id="PRO_0000338734" description="3-demethoxyubiquinol 3-hydroxylase">
    <location>
        <begin position="1"/>
        <end position="217"/>
    </location>
</feature>
<feature type="binding site" evidence="1">
    <location>
        <position position="66"/>
    </location>
    <ligand>
        <name>Fe cation</name>
        <dbReference type="ChEBI" id="CHEBI:24875"/>
        <label>1</label>
    </ligand>
</feature>
<feature type="binding site" evidence="1">
    <location>
        <position position="96"/>
    </location>
    <ligand>
        <name>Fe cation</name>
        <dbReference type="ChEBI" id="CHEBI:24875"/>
        <label>1</label>
    </ligand>
</feature>
<feature type="binding site" evidence="1">
    <location>
        <position position="96"/>
    </location>
    <ligand>
        <name>Fe cation</name>
        <dbReference type="ChEBI" id="CHEBI:24875"/>
        <label>2</label>
    </ligand>
</feature>
<feature type="binding site" evidence="1">
    <location>
        <position position="99"/>
    </location>
    <ligand>
        <name>Fe cation</name>
        <dbReference type="ChEBI" id="CHEBI:24875"/>
        <label>1</label>
    </ligand>
</feature>
<feature type="binding site" evidence="1">
    <location>
        <position position="148"/>
    </location>
    <ligand>
        <name>Fe cation</name>
        <dbReference type="ChEBI" id="CHEBI:24875"/>
        <label>2</label>
    </ligand>
</feature>
<feature type="binding site" evidence="1">
    <location>
        <position position="180"/>
    </location>
    <ligand>
        <name>Fe cation</name>
        <dbReference type="ChEBI" id="CHEBI:24875"/>
        <label>1</label>
    </ligand>
</feature>
<feature type="binding site" evidence="1">
    <location>
        <position position="180"/>
    </location>
    <ligand>
        <name>Fe cation</name>
        <dbReference type="ChEBI" id="CHEBI:24875"/>
        <label>2</label>
    </ligand>
</feature>
<feature type="binding site" evidence="1">
    <location>
        <position position="183"/>
    </location>
    <ligand>
        <name>Fe cation</name>
        <dbReference type="ChEBI" id="CHEBI:24875"/>
        <label>2</label>
    </ligand>
</feature>
<dbReference type="EC" id="1.14.99.60" evidence="1"/>
<dbReference type="EMBL" id="AE008922">
    <property type="protein sequence ID" value="AAM39793.1"/>
    <property type="molecule type" value="Genomic_DNA"/>
</dbReference>
<dbReference type="RefSeq" id="NP_635869.1">
    <property type="nucleotide sequence ID" value="NC_003902.1"/>
</dbReference>
<dbReference type="RefSeq" id="WP_011035727.1">
    <property type="nucleotide sequence ID" value="NC_003902.1"/>
</dbReference>
<dbReference type="SMR" id="Q8PD67"/>
<dbReference type="STRING" id="190485.XCC0475"/>
<dbReference type="EnsemblBacteria" id="AAM39793">
    <property type="protein sequence ID" value="AAM39793"/>
    <property type="gene ID" value="XCC0475"/>
</dbReference>
<dbReference type="GeneID" id="58011787"/>
<dbReference type="KEGG" id="xcc:XCC0475"/>
<dbReference type="PATRIC" id="fig|190485.4.peg.522"/>
<dbReference type="eggNOG" id="COG2941">
    <property type="taxonomic scope" value="Bacteria"/>
</dbReference>
<dbReference type="HOGENOM" id="CLU_088601_0_0_6"/>
<dbReference type="OrthoDB" id="5192789at2"/>
<dbReference type="UniPathway" id="UPA00232"/>
<dbReference type="Proteomes" id="UP000001010">
    <property type="component" value="Chromosome"/>
</dbReference>
<dbReference type="GO" id="GO:0005886">
    <property type="term" value="C:plasma membrane"/>
    <property type="evidence" value="ECO:0007669"/>
    <property type="project" value="UniProtKB-SubCell"/>
</dbReference>
<dbReference type="GO" id="GO:0008682">
    <property type="term" value="F:3-demethoxyubiquinol 3-hydroxylase activity"/>
    <property type="evidence" value="ECO:0007669"/>
    <property type="project" value="UniProtKB-EC"/>
</dbReference>
<dbReference type="GO" id="GO:0046872">
    <property type="term" value="F:metal ion binding"/>
    <property type="evidence" value="ECO:0007669"/>
    <property type="project" value="UniProtKB-KW"/>
</dbReference>
<dbReference type="GO" id="GO:0006744">
    <property type="term" value="P:ubiquinone biosynthetic process"/>
    <property type="evidence" value="ECO:0007669"/>
    <property type="project" value="UniProtKB-UniRule"/>
</dbReference>
<dbReference type="CDD" id="cd01042">
    <property type="entry name" value="DMQH"/>
    <property type="match status" value="1"/>
</dbReference>
<dbReference type="FunFam" id="1.20.1260.10:FF:000013">
    <property type="entry name" value="2-nonaprenyl-3-methyl-6-methoxy-1,4-benzoquinol hydroxylase"/>
    <property type="match status" value="1"/>
</dbReference>
<dbReference type="Gene3D" id="1.20.1260.10">
    <property type="match status" value="1"/>
</dbReference>
<dbReference type="HAMAP" id="MF_01658">
    <property type="entry name" value="COQ7"/>
    <property type="match status" value="1"/>
</dbReference>
<dbReference type="InterPro" id="IPR047809">
    <property type="entry name" value="COQ7_proteobact"/>
</dbReference>
<dbReference type="InterPro" id="IPR012347">
    <property type="entry name" value="Ferritin-like"/>
</dbReference>
<dbReference type="InterPro" id="IPR009078">
    <property type="entry name" value="Ferritin-like_SF"/>
</dbReference>
<dbReference type="InterPro" id="IPR011566">
    <property type="entry name" value="Ubq_synth_Coq7"/>
</dbReference>
<dbReference type="NCBIfam" id="NF033656">
    <property type="entry name" value="DMQ_monoox_COQ7"/>
    <property type="match status" value="1"/>
</dbReference>
<dbReference type="PANTHER" id="PTHR11237:SF4">
    <property type="entry name" value="5-DEMETHOXYUBIQUINONE HYDROXYLASE, MITOCHONDRIAL"/>
    <property type="match status" value="1"/>
</dbReference>
<dbReference type="PANTHER" id="PTHR11237">
    <property type="entry name" value="COENZYME Q10 BIOSYNTHESIS PROTEIN 7"/>
    <property type="match status" value="1"/>
</dbReference>
<dbReference type="Pfam" id="PF03232">
    <property type="entry name" value="COQ7"/>
    <property type="match status" value="1"/>
</dbReference>
<dbReference type="SUPFAM" id="SSF47240">
    <property type="entry name" value="Ferritin-like"/>
    <property type="match status" value="1"/>
</dbReference>
<keyword id="KW-1003">Cell membrane</keyword>
<keyword id="KW-0408">Iron</keyword>
<keyword id="KW-0472">Membrane</keyword>
<keyword id="KW-0479">Metal-binding</keyword>
<keyword id="KW-0503">Monooxygenase</keyword>
<keyword id="KW-0560">Oxidoreductase</keyword>
<keyword id="KW-1185">Reference proteome</keyword>
<keyword id="KW-0831">Ubiquinone biosynthesis</keyword>